<comment type="similarity">
    <text evidence="1">Belongs to the bacterial ribosomal protein bS21 family.</text>
</comment>
<reference key="1">
    <citation type="journal article" date="2006" name="J. Bacteriol.">
        <title>Genome sequence of Aeromonas hydrophila ATCC 7966T: jack of all trades.</title>
        <authorList>
            <person name="Seshadri R."/>
            <person name="Joseph S.W."/>
            <person name="Chopra A.K."/>
            <person name="Sha J."/>
            <person name="Shaw J."/>
            <person name="Graf J."/>
            <person name="Haft D.H."/>
            <person name="Wu M."/>
            <person name="Ren Q."/>
            <person name="Rosovitz M.J."/>
            <person name="Madupu R."/>
            <person name="Tallon L."/>
            <person name="Kim M."/>
            <person name="Jin S."/>
            <person name="Vuong H."/>
            <person name="Stine O.C."/>
            <person name="Ali A."/>
            <person name="Horneman A.J."/>
            <person name="Heidelberg J.F."/>
        </authorList>
    </citation>
    <scope>NUCLEOTIDE SEQUENCE [LARGE SCALE GENOMIC DNA]</scope>
    <source>
        <strain>ATCC 7966 / DSM 30187 / BCRC 13018 / CCUG 14551 / JCM 1027 / KCTC 2358 / NCIMB 9240 / NCTC 8049</strain>
    </source>
</reference>
<organism>
    <name type="scientific">Aeromonas hydrophila subsp. hydrophila (strain ATCC 7966 / DSM 30187 / BCRC 13018 / CCUG 14551 / JCM 1027 / KCTC 2358 / NCIMB 9240 / NCTC 8049)</name>
    <dbReference type="NCBI Taxonomy" id="380703"/>
    <lineage>
        <taxon>Bacteria</taxon>
        <taxon>Pseudomonadati</taxon>
        <taxon>Pseudomonadota</taxon>
        <taxon>Gammaproteobacteria</taxon>
        <taxon>Aeromonadales</taxon>
        <taxon>Aeromonadaceae</taxon>
        <taxon>Aeromonas</taxon>
    </lineage>
</organism>
<proteinExistence type="inferred from homology"/>
<gene>
    <name evidence="1" type="primary">rpsU</name>
    <name type="ordered locus">AHA_0832</name>
</gene>
<dbReference type="EMBL" id="CP000462">
    <property type="protein sequence ID" value="ABK36508.1"/>
    <property type="molecule type" value="Genomic_DNA"/>
</dbReference>
<dbReference type="RefSeq" id="WP_005309452.1">
    <property type="nucleotide sequence ID" value="NC_008570.1"/>
</dbReference>
<dbReference type="RefSeq" id="YP_855375.1">
    <property type="nucleotide sequence ID" value="NC_008570.1"/>
</dbReference>
<dbReference type="SMR" id="A0KGI4"/>
<dbReference type="STRING" id="380703.AHA_0832"/>
<dbReference type="EnsemblBacteria" id="ABK36508">
    <property type="protein sequence ID" value="ABK36508"/>
    <property type="gene ID" value="AHA_0832"/>
</dbReference>
<dbReference type="GeneID" id="97857504"/>
<dbReference type="KEGG" id="aha:AHA_0832"/>
<dbReference type="PATRIC" id="fig|380703.7.peg.832"/>
<dbReference type="eggNOG" id="COG0828">
    <property type="taxonomic scope" value="Bacteria"/>
</dbReference>
<dbReference type="HOGENOM" id="CLU_159258_1_0_6"/>
<dbReference type="OrthoDB" id="9799244at2"/>
<dbReference type="PRO" id="PR:A0KGI4"/>
<dbReference type="Proteomes" id="UP000000756">
    <property type="component" value="Chromosome"/>
</dbReference>
<dbReference type="GO" id="GO:1990904">
    <property type="term" value="C:ribonucleoprotein complex"/>
    <property type="evidence" value="ECO:0007669"/>
    <property type="project" value="UniProtKB-KW"/>
</dbReference>
<dbReference type="GO" id="GO:0005840">
    <property type="term" value="C:ribosome"/>
    <property type="evidence" value="ECO:0007669"/>
    <property type="project" value="UniProtKB-KW"/>
</dbReference>
<dbReference type="GO" id="GO:0003735">
    <property type="term" value="F:structural constituent of ribosome"/>
    <property type="evidence" value="ECO:0007669"/>
    <property type="project" value="InterPro"/>
</dbReference>
<dbReference type="GO" id="GO:0006412">
    <property type="term" value="P:translation"/>
    <property type="evidence" value="ECO:0007669"/>
    <property type="project" value="UniProtKB-UniRule"/>
</dbReference>
<dbReference type="Gene3D" id="1.20.5.1150">
    <property type="entry name" value="Ribosomal protein S8"/>
    <property type="match status" value="1"/>
</dbReference>
<dbReference type="HAMAP" id="MF_00358">
    <property type="entry name" value="Ribosomal_bS21"/>
    <property type="match status" value="1"/>
</dbReference>
<dbReference type="InterPro" id="IPR001911">
    <property type="entry name" value="Ribosomal_bS21"/>
</dbReference>
<dbReference type="InterPro" id="IPR018278">
    <property type="entry name" value="Ribosomal_bS21_CS"/>
</dbReference>
<dbReference type="InterPro" id="IPR038380">
    <property type="entry name" value="Ribosomal_bS21_sf"/>
</dbReference>
<dbReference type="NCBIfam" id="TIGR00030">
    <property type="entry name" value="S21p"/>
    <property type="match status" value="1"/>
</dbReference>
<dbReference type="PANTHER" id="PTHR21109">
    <property type="entry name" value="MITOCHONDRIAL 28S RIBOSOMAL PROTEIN S21"/>
    <property type="match status" value="1"/>
</dbReference>
<dbReference type="PANTHER" id="PTHR21109:SF22">
    <property type="entry name" value="SMALL RIBOSOMAL SUBUNIT PROTEIN BS21"/>
    <property type="match status" value="1"/>
</dbReference>
<dbReference type="Pfam" id="PF01165">
    <property type="entry name" value="Ribosomal_S21"/>
    <property type="match status" value="1"/>
</dbReference>
<dbReference type="PRINTS" id="PR00976">
    <property type="entry name" value="RIBOSOMALS21"/>
</dbReference>
<dbReference type="PROSITE" id="PS01181">
    <property type="entry name" value="RIBOSOMAL_S21"/>
    <property type="match status" value="1"/>
</dbReference>
<keyword id="KW-1185">Reference proteome</keyword>
<keyword id="KW-0687">Ribonucleoprotein</keyword>
<keyword id="KW-0689">Ribosomal protein</keyword>
<feature type="chain" id="PRO_1000005091" description="Small ribosomal subunit protein bS21">
    <location>
        <begin position="1"/>
        <end position="71"/>
    </location>
</feature>
<feature type="region of interest" description="Disordered" evidence="2">
    <location>
        <begin position="48"/>
        <end position="71"/>
    </location>
</feature>
<feature type="compositionally biased region" description="Basic residues" evidence="2">
    <location>
        <begin position="48"/>
        <end position="59"/>
    </location>
</feature>
<feature type="compositionally biased region" description="Basic and acidic residues" evidence="2">
    <location>
        <begin position="60"/>
        <end position="71"/>
    </location>
</feature>
<name>RS21_AERHH</name>
<sequence>MPVIKVRENEPFDVALRRFKRSCEKAGILSEVRSREFYEKPTTIRKRAKASAVKRHAKKLSRENARRIRLY</sequence>
<evidence type="ECO:0000255" key="1">
    <source>
        <dbReference type="HAMAP-Rule" id="MF_00358"/>
    </source>
</evidence>
<evidence type="ECO:0000256" key="2">
    <source>
        <dbReference type="SAM" id="MobiDB-lite"/>
    </source>
</evidence>
<evidence type="ECO:0000305" key="3"/>
<accession>A0KGI4</accession>
<protein>
    <recommendedName>
        <fullName evidence="1">Small ribosomal subunit protein bS21</fullName>
    </recommendedName>
    <alternativeName>
        <fullName evidence="3">30S ribosomal protein S21</fullName>
    </alternativeName>
</protein>